<dbReference type="EC" id="2.7.8.-" evidence="1"/>
<dbReference type="EMBL" id="BA000018">
    <property type="protein sequence ID" value="BAB43175.1"/>
    <property type="molecule type" value="Genomic_DNA"/>
</dbReference>
<dbReference type="PIR" id="F90001">
    <property type="entry name" value="F90001"/>
</dbReference>
<dbReference type="RefSeq" id="WP_000571549.1">
    <property type="nucleotide sequence ID" value="NC_002745.2"/>
</dbReference>
<dbReference type="SMR" id="P63801"/>
<dbReference type="EnsemblBacteria" id="BAB43175">
    <property type="protein sequence ID" value="BAB43175"/>
    <property type="gene ID" value="BAB43175"/>
</dbReference>
<dbReference type="KEGG" id="sau:SA1891"/>
<dbReference type="HOGENOM" id="CLU_038053_1_1_9"/>
<dbReference type="BRENDA" id="2.7.8.B10">
    <property type="organism ID" value="3352"/>
</dbReference>
<dbReference type="GO" id="GO:0005886">
    <property type="term" value="C:plasma membrane"/>
    <property type="evidence" value="ECO:0007669"/>
    <property type="project" value="UniProtKB-SubCell"/>
</dbReference>
<dbReference type="GO" id="GO:0008808">
    <property type="term" value="F:cardiolipin synthase activity"/>
    <property type="evidence" value="ECO:0007669"/>
    <property type="project" value="InterPro"/>
</dbReference>
<dbReference type="GO" id="GO:0032049">
    <property type="term" value="P:cardiolipin biosynthetic process"/>
    <property type="evidence" value="ECO:0007669"/>
    <property type="project" value="InterPro"/>
</dbReference>
<dbReference type="CDD" id="cd09110">
    <property type="entry name" value="PLDc_CLS_1"/>
    <property type="match status" value="1"/>
</dbReference>
<dbReference type="CDD" id="cd09112">
    <property type="entry name" value="PLDc_CLS_2"/>
    <property type="match status" value="1"/>
</dbReference>
<dbReference type="FunFam" id="3.30.870.10:FF:000014">
    <property type="entry name" value="Cardiolipin synthase"/>
    <property type="match status" value="1"/>
</dbReference>
<dbReference type="FunFam" id="3.30.870.10:FF:000021">
    <property type="entry name" value="Cardiolipin synthase"/>
    <property type="match status" value="1"/>
</dbReference>
<dbReference type="Gene3D" id="3.30.870.10">
    <property type="entry name" value="Endonuclease Chain A"/>
    <property type="match status" value="2"/>
</dbReference>
<dbReference type="HAMAP" id="MF_01916">
    <property type="entry name" value="Cardiolipin_synth_Cls"/>
    <property type="match status" value="1"/>
</dbReference>
<dbReference type="InterPro" id="IPR030874">
    <property type="entry name" value="Cardiolipin_synth_Firmi"/>
</dbReference>
<dbReference type="InterPro" id="IPR022924">
    <property type="entry name" value="Cardiolipin_synthase"/>
</dbReference>
<dbReference type="InterPro" id="IPR027379">
    <property type="entry name" value="CLS_N"/>
</dbReference>
<dbReference type="InterPro" id="IPR025202">
    <property type="entry name" value="PLD-like_dom"/>
</dbReference>
<dbReference type="InterPro" id="IPR001736">
    <property type="entry name" value="PLipase_D/transphosphatidylase"/>
</dbReference>
<dbReference type="NCBIfam" id="TIGR04265">
    <property type="entry name" value="bac_cardiolipin"/>
    <property type="match status" value="1"/>
</dbReference>
<dbReference type="PANTHER" id="PTHR21248">
    <property type="entry name" value="CARDIOLIPIN SYNTHASE"/>
    <property type="match status" value="1"/>
</dbReference>
<dbReference type="PANTHER" id="PTHR21248:SF22">
    <property type="entry name" value="PHOSPHOLIPASE D"/>
    <property type="match status" value="1"/>
</dbReference>
<dbReference type="Pfam" id="PF13091">
    <property type="entry name" value="PLDc_2"/>
    <property type="match status" value="2"/>
</dbReference>
<dbReference type="Pfam" id="PF13396">
    <property type="entry name" value="PLDc_N"/>
    <property type="match status" value="1"/>
</dbReference>
<dbReference type="SMART" id="SM00155">
    <property type="entry name" value="PLDc"/>
    <property type="match status" value="2"/>
</dbReference>
<dbReference type="SUPFAM" id="SSF56024">
    <property type="entry name" value="Phospholipase D/nuclease"/>
    <property type="match status" value="2"/>
</dbReference>
<dbReference type="PROSITE" id="PS50035">
    <property type="entry name" value="PLD"/>
    <property type="match status" value="2"/>
</dbReference>
<comment type="function">
    <text evidence="1">Catalyzes the reversible phosphatidyl group transfer from one phosphatidylglycerol molecule to another to form cardiolipin (CL) (diphosphatidylglycerol) and glycerol.</text>
</comment>
<comment type="catalytic activity">
    <reaction evidence="1">
        <text>2 a 1,2-diacyl-sn-glycero-3-phospho-(1'-sn-glycerol) = a cardiolipin + glycerol</text>
        <dbReference type="Rhea" id="RHEA:31451"/>
        <dbReference type="ChEBI" id="CHEBI:17754"/>
        <dbReference type="ChEBI" id="CHEBI:62237"/>
        <dbReference type="ChEBI" id="CHEBI:64716"/>
    </reaction>
</comment>
<comment type="subcellular location">
    <subcellularLocation>
        <location evidence="1">Cell membrane</location>
        <topology evidence="1">Multi-pass membrane protein</topology>
    </subcellularLocation>
</comment>
<comment type="similarity">
    <text evidence="1">Belongs to the phospholipase D family. Cardiolipin synthase subfamily.</text>
</comment>
<sequence length="494" mass="56518">MIELLSIALKHSNIILNSIFIGAFILNLLFAFTIIFMERRSANSIWAWLLVLVFLPLFGFILYLLLGRQIQRDQIFKIDKEDKKGLELIVDEQLAALKNENFSNSNYQIVKFKEMIQMLLYNNAAFLTTDNDLKIYTDGQEKFDDLIQDIRNATDYIHFQYYIIQNDELGRTILNELGKKAEQGVEVKILYDDMGSRGLRKKGLRPFRNKGGHAEAFFPSKLPLINLRMNNRNHRKIVVIDGQIGYVGGFNVGDEYLGKSKKFGYWRDTHLRIVGDAVNALQLRFILDWNSQATRDHISYDDRYFPDVNSGGTIGVQIASSGPDEEWEQIKYGYLKMISSAKKSIYIQSPYFIPDQAFLDSIKIAALGGVDVNIMIPNKPDHPFVFWATLKNAASLLDAGVKVFHYDNGFLHSKTLVIDDEIASVGTANMDHRSFTLNFEVNAFIYDQQIAKKLKQAFIDDLAVSSELTKARYAKRSLWIKFKEGISQLLSPIL</sequence>
<name>CLS_STAAN</name>
<proteinExistence type="evidence at protein level"/>
<feature type="chain" id="PRO_0000201270" description="Cardiolipin synthase">
    <location>
        <begin position="1"/>
        <end position="494"/>
    </location>
</feature>
<feature type="transmembrane region" description="Helical" evidence="1">
    <location>
        <begin position="14"/>
        <end position="34"/>
    </location>
</feature>
<feature type="transmembrane region" description="Helical" evidence="1">
    <location>
        <begin position="45"/>
        <end position="65"/>
    </location>
</feature>
<feature type="domain" description="PLD phosphodiesterase 1" evidence="1">
    <location>
        <begin position="229"/>
        <end position="256"/>
    </location>
</feature>
<feature type="domain" description="PLD phosphodiesterase 2" evidence="1">
    <location>
        <begin position="407"/>
        <end position="434"/>
    </location>
</feature>
<feature type="active site" evidence="1">
    <location>
        <position position="234"/>
    </location>
</feature>
<feature type="active site" evidence="1">
    <location>
        <position position="236"/>
    </location>
</feature>
<feature type="active site" evidence="1">
    <location>
        <position position="241"/>
    </location>
</feature>
<feature type="active site" evidence="1">
    <location>
        <position position="412"/>
    </location>
</feature>
<feature type="active site" evidence="1">
    <location>
        <position position="414"/>
    </location>
</feature>
<feature type="active site" evidence="1">
    <location>
        <position position="419"/>
    </location>
</feature>
<accession>P63801</accession>
<accession>Q99SG9</accession>
<evidence type="ECO:0000255" key="1">
    <source>
        <dbReference type="HAMAP-Rule" id="MF_01916"/>
    </source>
</evidence>
<protein>
    <recommendedName>
        <fullName evidence="1">Cardiolipin synthase</fullName>
        <shortName evidence="1">CL synthase</shortName>
        <ecNumber evidence="1">2.7.8.-</ecNumber>
    </recommendedName>
</protein>
<reference key="1">
    <citation type="journal article" date="2001" name="Lancet">
        <title>Whole genome sequencing of meticillin-resistant Staphylococcus aureus.</title>
        <authorList>
            <person name="Kuroda M."/>
            <person name="Ohta T."/>
            <person name="Uchiyama I."/>
            <person name="Baba T."/>
            <person name="Yuzawa H."/>
            <person name="Kobayashi I."/>
            <person name="Cui L."/>
            <person name="Oguchi A."/>
            <person name="Aoki K."/>
            <person name="Nagai Y."/>
            <person name="Lian J.-Q."/>
            <person name="Ito T."/>
            <person name="Kanamori M."/>
            <person name="Matsumaru H."/>
            <person name="Maruyama A."/>
            <person name="Murakami H."/>
            <person name="Hosoyama A."/>
            <person name="Mizutani-Ui Y."/>
            <person name="Takahashi N.K."/>
            <person name="Sawano T."/>
            <person name="Inoue R."/>
            <person name="Kaito C."/>
            <person name="Sekimizu K."/>
            <person name="Hirakawa H."/>
            <person name="Kuhara S."/>
            <person name="Goto S."/>
            <person name="Yabuzaki J."/>
            <person name="Kanehisa M."/>
            <person name="Yamashita A."/>
            <person name="Oshima K."/>
            <person name="Furuya K."/>
            <person name="Yoshino C."/>
            <person name="Shiba T."/>
            <person name="Hattori M."/>
            <person name="Ogasawara N."/>
            <person name="Hayashi H."/>
            <person name="Hiramatsu K."/>
        </authorList>
    </citation>
    <scope>NUCLEOTIDE SEQUENCE [LARGE SCALE GENOMIC DNA]</scope>
    <source>
        <strain>N315</strain>
    </source>
</reference>
<reference key="2">
    <citation type="submission" date="2007-10" db="UniProtKB">
        <title>Shotgun proteomic analysis of total and membrane protein extracts of S. aureus strain N315.</title>
        <authorList>
            <person name="Vaezzadeh A.R."/>
            <person name="Deshusses J."/>
            <person name="Lescuyer P."/>
            <person name="Hochstrasser D.F."/>
        </authorList>
    </citation>
    <scope>IDENTIFICATION BY MASS SPECTROMETRY [LARGE SCALE ANALYSIS]</scope>
    <source>
        <strain>N315</strain>
    </source>
</reference>
<keyword id="KW-1003">Cell membrane</keyword>
<keyword id="KW-0444">Lipid biosynthesis</keyword>
<keyword id="KW-0443">Lipid metabolism</keyword>
<keyword id="KW-0472">Membrane</keyword>
<keyword id="KW-0594">Phospholipid biosynthesis</keyword>
<keyword id="KW-1208">Phospholipid metabolism</keyword>
<keyword id="KW-0677">Repeat</keyword>
<keyword id="KW-0808">Transferase</keyword>
<keyword id="KW-0812">Transmembrane</keyword>
<keyword id="KW-1133">Transmembrane helix</keyword>
<organism>
    <name type="scientific">Staphylococcus aureus (strain N315)</name>
    <dbReference type="NCBI Taxonomy" id="158879"/>
    <lineage>
        <taxon>Bacteria</taxon>
        <taxon>Bacillati</taxon>
        <taxon>Bacillota</taxon>
        <taxon>Bacilli</taxon>
        <taxon>Bacillales</taxon>
        <taxon>Staphylococcaceae</taxon>
        <taxon>Staphylococcus</taxon>
    </lineage>
</organism>
<gene>
    <name type="primary">cls</name>
    <name type="ordered locus">SA1891</name>
</gene>